<evidence type="ECO:0000250" key="1">
    <source>
        <dbReference type="UniProtKB" id="P55081"/>
    </source>
</evidence>
<evidence type="ECO:0000256" key="2">
    <source>
        <dbReference type="SAM" id="MobiDB-lite"/>
    </source>
</evidence>
<evidence type="ECO:0000269" key="3">
    <source>
    </source>
</evidence>
<evidence type="ECO:0000305" key="4"/>
<evidence type="ECO:0000305" key="5">
    <source>
    </source>
</evidence>
<evidence type="ECO:0000312" key="6">
    <source>
        <dbReference type="EMBL" id="AAK77294.1"/>
    </source>
</evidence>
<evidence type="ECO:0000312" key="7">
    <source>
        <dbReference type="FlyBase" id="FBgn0035294"/>
    </source>
</evidence>
<evidence type="ECO:0000312" key="8">
    <source>
        <dbReference type="Proteomes" id="UP000000803"/>
    </source>
</evidence>
<gene>
    <name evidence="7" type="primary">Mfap1</name>
    <name evidence="7" type="ORF">CG1017</name>
</gene>
<reference evidence="8" key="1">
    <citation type="journal article" date="2000" name="Science">
        <title>The genome sequence of Drosophila melanogaster.</title>
        <authorList>
            <person name="Adams M.D."/>
            <person name="Celniker S.E."/>
            <person name="Holt R.A."/>
            <person name="Evans C.A."/>
            <person name="Gocayne J.D."/>
            <person name="Amanatides P.G."/>
            <person name="Scherer S.E."/>
            <person name="Li P.W."/>
            <person name="Hoskins R.A."/>
            <person name="Galle R.F."/>
            <person name="George R.A."/>
            <person name="Lewis S.E."/>
            <person name="Richards S."/>
            <person name="Ashburner M."/>
            <person name="Henderson S.N."/>
            <person name="Sutton G.G."/>
            <person name="Wortman J.R."/>
            <person name="Yandell M.D."/>
            <person name="Zhang Q."/>
            <person name="Chen L.X."/>
            <person name="Brandon R.C."/>
            <person name="Rogers Y.-H.C."/>
            <person name="Blazej R.G."/>
            <person name="Champe M."/>
            <person name="Pfeiffer B.D."/>
            <person name="Wan K.H."/>
            <person name="Doyle C."/>
            <person name="Baxter E.G."/>
            <person name="Helt G."/>
            <person name="Nelson C.R."/>
            <person name="Miklos G.L.G."/>
            <person name="Abril J.F."/>
            <person name="Agbayani A."/>
            <person name="An H.-J."/>
            <person name="Andrews-Pfannkoch C."/>
            <person name="Baldwin D."/>
            <person name="Ballew R.M."/>
            <person name="Basu A."/>
            <person name="Baxendale J."/>
            <person name="Bayraktaroglu L."/>
            <person name="Beasley E.M."/>
            <person name="Beeson K.Y."/>
            <person name="Benos P.V."/>
            <person name="Berman B.P."/>
            <person name="Bhandari D."/>
            <person name="Bolshakov S."/>
            <person name="Borkova D."/>
            <person name="Botchan M.R."/>
            <person name="Bouck J."/>
            <person name="Brokstein P."/>
            <person name="Brottier P."/>
            <person name="Burtis K.C."/>
            <person name="Busam D.A."/>
            <person name="Butler H."/>
            <person name="Cadieu E."/>
            <person name="Center A."/>
            <person name="Chandra I."/>
            <person name="Cherry J.M."/>
            <person name="Cawley S."/>
            <person name="Dahlke C."/>
            <person name="Davenport L.B."/>
            <person name="Davies P."/>
            <person name="de Pablos B."/>
            <person name="Delcher A."/>
            <person name="Deng Z."/>
            <person name="Mays A.D."/>
            <person name="Dew I."/>
            <person name="Dietz S.M."/>
            <person name="Dodson K."/>
            <person name="Doup L.E."/>
            <person name="Downes M."/>
            <person name="Dugan-Rocha S."/>
            <person name="Dunkov B.C."/>
            <person name="Dunn P."/>
            <person name="Durbin K.J."/>
            <person name="Evangelista C.C."/>
            <person name="Ferraz C."/>
            <person name="Ferriera S."/>
            <person name="Fleischmann W."/>
            <person name="Fosler C."/>
            <person name="Gabrielian A.E."/>
            <person name="Garg N.S."/>
            <person name="Gelbart W.M."/>
            <person name="Glasser K."/>
            <person name="Glodek A."/>
            <person name="Gong F."/>
            <person name="Gorrell J.H."/>
            <person name="Gu Z."/>
            <person name="Guan P."/>
            <person name="Harris M."/>
            <person name="Harris N.L."/>
            <person name="Harvey D.A."/>
            <person name="Heiman T.J."/>
            <person name="Hernandez J.R."/>
            <person name="Houck J."/>
            <person name="Hostin D."/>
            <person name="Houston K.A."/>
            <person name="Howland T.J."/>
            <person name="Wei M.-H."/>
            <person name="Ibegwam C."/>
            <person name="Jalali M."/>
            <person name="Kalush F."/>
            <person name="Karpen G.H."/>
            <person name="Ke Z."/>
            <person name="Kennison J.A."/>
            <person name="Ketchum K.A."/>
            <person name="Kimmel B.E."/>
            <person name="Kodira C.D."/>
            <person name="Kraft C.L."/>
            <person name="Kravitz S."/>
            <person name="Kulp D."/>
            <person name="Lai Z."/>
            <person name="Lasko P."/>
            <person name="Lei Y."/>
            <person name="Levitsky A.A."/>
            <person name="Li J.H."/>
            <person name="Li Z."/>
            <person name="Liang Y."/>
            <person name="Lin X."/>
            <person name="Liu X."/>
            <person name="Mattei B."/>
            <person name="McIntosh T.C."/>
            <person name="McLeod M.P."/>
            <person name="McPherson D."/>
            <person name="Merkulov G."/>
            <person name="Milshina N.V."/>
            <person name="Mobarry C."/>
            <person name="Morris J."/>
            <person name="Moshrefi A."/>
            <person name="Mount S.M."/>
            <person name="Moy M."/>
            <person name="Murphy B."/>
            <person name="Murphy L."/>
            <person name="Muzny D.M."/>
            <person name="Nelson D.L."/>
            <person name="Nelson D.R."/>
            <person name="Nelson K.A."/>
            <person name="Nixon K."/>
            <person name="Nusskern D.R."/>
            <person name="Pacleb J.M."/>
            <person name="Palazzolo M."/>
            <person name="Pittman G.S."/>
            <person name="Pan S."/>
            <person name="Pollard J."/>
            <person name="Puri V."/>
            <person name="Reese M.G."/>
            <person name="Reinert K."/>
            <person name="Remington K."/>
            <person name="Saunders R.D.C."/>
            <person name="Scheeler F."/>
            <person name="Shen H."/>
            <person name="Shue B.C."/>
            <person name="Siden-Kiamos I."/>
            <person name="Simpson M."/>
            <person name="Skupski M.P."/>
            <person name="Smith T.J."/>
            <person name="Spier E."/>
            <person name="Spradling A.C."/>
            <person name="Stapleton M."/>
            <person name="Strong R."/>
            <person name="Sun E."/>
            <person name="Svirskas R."/>
            <person name="Tector C."/>
            <person name="Turner R."/>
            <person name="Venter E."/>
            <person name="Wang A.H."/>
            <person name="Wang X."/>
            <person name="Wang Z.-Y."/>
            <person name="Wassarman D.A."/>
            <person name="Weinstock G.M."/>
            <person name="Weissenbach J."/>
            <person name="Williams S.M."/>
            <person name="Woodage T."/>
            <person name="Worley K.C."/>
            <person name="Wu D."/>
            <person name="Yang S."/>
            <person name="Yao Q.A."/>
            <person name="Ye J."/>
            <person name="Yeh R.-F."/>
            <person name="Zaveri J.S."/>
            <person name="Zhan M."/>
            <person name="Zhang G."/>
            <person name="Zhao Q."/>
            <person name="Zheng L."/>
            <person name="Zheng X.H."/>
            <person name="Zhong F.N."/>
            <person name="Zhong W."/>
            <person name="Zhou X."/>
            <person name="Zhu S.C."/>
            <person name="Zhu X."/>
            <person name="Smith H.O."/>
            <person name="Gibbs R.A."/>
            <person name="Myers E.W."/>
            <person name="Rubin G.M."/>
            <person name="Venter J.C."/>
        </authorList>
    </citation>
    <scope>NUCLEOTIDE SEQUENCE [LARGE SCALE GENOMIC DNA]</scope>
    <source>
        <strain evidence="8">Berkeley</strain>
    </source>
</reference>
<reference evidence="8" key="2">
    <citation type="journal article" date="2002" name="Genome Biol.">
        <title>Annotation of the Drosophila melanogaster euchromatic genome: a systematic review.</title>
        <authorList>
            <person name="Misra S."/>
            <person name="Crosby M.A."/>
            <person name="Mungall C.J."/>
            <person name="Matthews B.B."/>
            <person name="Campbell K.S."/>
            <person name="Hradecky P."/>
            <person name="Huang Y."/>
            <person name="Kaminker J.S."/>
            <person name="Millburn G.H."/>
            <person name="Prochnik S.E."/>
            <person name="Smith C.D."/>
            <person name="Tupy J.L."/>
            <person name="Whitfield E.J."/>
            <person name="Bayraktaroglu L."/>
            <person name="Berman B.P."/>
            <person name="Bettencourt B.R."/>
            <person name="Celniker S.E."/>
            <person name="de Grey A.D.N.J."/>
            <person name="Drysdale R.A."/>
            <person name="Harris N.L."/>
            <person name="Richter J."/>
            <person name="Russo S."/>
            <person name="Schroeder A.J."/>
            <person name="Shu S.Q."/>
            <person name="Stapleton M."/>
            <person name="Yamada C."/>
            <person name="Ashburner M."/>
            <person name="Gelbart W.M."/>
            <person name="Rubin G.M."/>
            <person name="Lewis S.E."/>
        </authorList>
    </citation>
    <scope>GENOME REANNOTATION</scope>
    <source>
        <strain evidence="8">Berkeley</strain>
    </source>
</reference>
<reference evidence="6" key="3">
    <citation type="journal article" date="2002" name="Genome Biol.">
        <title>A Drosophila full-length cDNA resource.</title>
        <authorList>
            <person name="Stapleton M."/>
            <person name="Carlson J.W."/>
            <person name="Brokstein P."/>
            <person name="Yu C."/>
            <person name="Champe M."/>
            <person name="George R.A."/>
            <person name="Guarin H."/>
            <person name="Kronmiller B."/>
            <person name="Pacleb J.M."/>
            <person name="Park S."/>
            <person name="Wan K.H."/>
            <person name="Rubin G.M."/>
            <person name="Celniker S.E."/>
        </authorList>
    </citation>
    <scope>NUCLEOTIDE SEQUENCE [LARGE SCALE MRNA]</scope>
    <source>
        <strain evidence="6">Berkeley</strain>
        <tissue evidence="6">Head</tissue>
    </source>
</reference>
<reference evidence="4" key="4">
    <citation type="journal article" date="2008" name="J. Biol. Chem.">
        <title>Drosophila MFAP1 is required for pre-mRNA processing and G2/M progression.</title>
        <authorList>
            <person name="Andersen D.S."/>
            <person name="Tapon N."/>
        </authorList>
    </citation>
    <scope>FUNCTION</scope>
    <scope>SUBUNIT</scope>
    <scope>INTERACTION WITH PRP38</scope>
    <scope>SUBCELLULAR LOCATION</scope>
    <scope>IDENTIFICATION BY MASS SPECTROMETRY</scope>
</reference>
<accession>Q9W062</accession>
<organism evidence="8">
    <name type="scientific">Drosophila melanogaster</name>
    <name type="common">Fruit fly</name>
    <dbReference type="NCBI Taxonomy" id="7227"/>
    <lineage>
        <taxon>Eukaryota</taxon>
        <taxon>Metazoa</taxon>
        <taxon>Ecdysozoa</taxon>
        <taxon>Arthropoda</taxon>
        <taxon>Hexapoda</taxon>
        <taxon>Insecta</taxon>
        <taxon>Pterygota</taxon>
        <taxon>Neoptera</taxon>
        <taxon>Endopterygota</taxon>
        <taxon>Diptera</taxon>
        <taxon>Brachycera</taxon>
        <taxon>Muscomorpha</taxon>
        <taxon>Ephydroidea</taxon>
        <taxon>Drosophilidae</taxon>
        <taxon>Drosophila</taxon>
        <taxon>Sophophora</taxon>
    </lineage>
</organism>
<feature type="chain" id="PRO_0000438173" description="Microfibrillar-associated protein 1">
    <location>
        <begin position="1"/>
        <end position="478"/>
    </location>
</feature>
<feature type="region of interest" description="Disordered" evidence="2">
    <location>
        <begin position="1"/>
        <end position="276"/>
    </location>
</feature>
<feature type="region of interest" description="Interaction with Prp38" evidence="3">
    <location>
        <begin position="229"/>
        <end position="478"/>
    </location>
</feature>
<feature type="region of interest" description="Disordered" evidence="2">
    <location>
        <begin position="456"/>
        <end position="478"/>
    </location>
</feature>
<feature type="compositionally biased region" description="Low complexity" evidence="2">
    <location>
        <begin position="1"/>
        <end position="20"/>
    </location>
</feature>
<feature type="compositionally biased region" description="Acidic residues" evidence="2">
    <location>
        <begin position="53"/>
        <end position="62"/>
    </location>
</feature>
<feature type="compositionally biased region" description="Basic and acidic residues" evidence="2">
    <location>
        <begin position="107"/>
        <end position="128"/>
    </location>
</feature>
<feature type="compositionally biased region" description="Acidic residues" evidence="2">
    <location>
        <begin position="140"/>
        <end position="153"/>
    </location>
</feature>
<feature type="compositionally biased region" description="Polar residues" evidence="2">
    <location>
        <begin position="160"/>
        <end position="170"/>
    </location>
</feature>
<feature type="compositionally biased region" description="Acidic residues" evidence="2">
    <location>
        <begin position="171"/>
        <end position="181"/>
    </location>
</feature>
<feature type="compositionally biased region" description="Basic and acidic residues" evidence="2">
    <location>
        <begin position="197"/>
        <end position="212"/>
    </location>
</feature>
<feature type="compositionally biased region" description="Acidic residues" evidence="2">
    <location>
        <begin position="214"/>
        <end position="231"/>
    </location>
</feature>
<feature type="compositionally biased region" description="Basic and acidic residues" evidence="2">
    <location>
        <begin position="245"/>
        <end position="268"/>
    </location>
</feature>
<sequence>MSAATAAAAASGIQSTAGAIPMRNEKGELSMQKVKVQRYISGKRPDYARADSSSEESDDDDFIDTRKRLERHKAERHKLELSRQGGSAEGEERAAGEGQEEDDAEVDDPRLRRLRQRPVDMEDMERERRERHRHIHEPEIMESDSEDEEEDEGAQGAIQRGTNKITLASESDTDAELSDTELENRRTKLRSRMLQQQREEEVLQKEDEKQSESSESESSEYEEETESEEDNEPRLKPLFVRKRDRATIQEKEREAQKQKQLEAEAKRAAKERRRATLRMVEESVKKDLEKTKPETNEACIEDVCTDDENDEVEYEAWKLRELKRMKRDREERDNVEREKLDIDRMRNMTEEERRQELRQNPKVVTNKATKGKYKFLQKYYHRGAFYLDEENDVLKRDFAQATLEDHFDKTILPKVMQVKNFGRCGRTKYTHLVDQDTTKFDSPWYAESSSNIKFHNEHAGGMRQQFDKPTGSKRKKME</sequence>
<dbReference type="EMBL" id="AE014296">
    <property type="protein sequence ID" value="AAF47596.1"/>
    <property type="molecule type" value="Genomic_DNA"/>
</dbReference>
<dbReference type="EMBL" id="AY047562">
    <property type="protein sequence ID" value="AAK77294.1"/>
    <property type="molecule type" value="mRNA"/>
</dbReference>
<dbReference type="RefSeq" id="NP_647679.1">
    <property type="nucleotide sequence ID" value="NM_139422.3"/>
</dbReference>
<dbReference type="SMR" id="Q9W062"/>
<dbReference type="FunCoup" id="Q9W062">
    <property type="interactions" value="1763"/>
</dbReference>
<dbReference type="IntAct" id="Q9W062">
    <property type="interactions" value="7"/>
</dbReference>
<dbReference type="STRING" id="7227.FBpp0072720"/>
<dbReference type="PaxDb" id="7227-FBpp0072720"/>
<dbReference type="DNASU" id="38256"/>
<dbReference type="EnsemblMetazoa" id="FBtr0072841">
    <property type="protein sequence ID" value="FBpp0072720"/>
    <property type="gene ID" value="FBgn0035294"/>
</dbReference>
<dbReference type="GeneID" id="38256"/>
<dbReference type="KEGG" id="dme:Dmel_CG1017"/>
<dbReference type="UCSC" id="CG1017-RA">
    <property type="organism name" value="d. melanogaster"/>
</dbReference>
<dbReference type="AGR" id="FB:FBgn0035294"/>
<dbReference type="CTD" id="4236"/>
<dbReference type="FlyBase" id="FBgn0035294">
    <property type="gene designation" value="Mfap1"/>
</dbReference>
<dbReference type="VEuPathDB" id="VectorBase:FBgn0035294"/>
<dbReference type="eggNOG" id="KOG1425">
    <property type="taxonomic scope" value="Eukaryota"/>
</dbReference>
<dbReference type="GeneTree" id="ENSGT00690000102225"/>
<dbReference type="HOGENOM" id="CLU_023077_1_0_1"/>
<dbReference type="InParanoid" id="Q9W062"/>
<dbReference type="OMA" id="FHNERAG"/>
<dbReference type="OrthoDB" id="1111734at2759"/>
<dbReference type="PhylomeDB" id="Q9W062"/>
<dbReference type="BioGRID-ORCS" id="38256">
    <property type="hits" value="0 hits in 1 CRISPR screen"/>
</dbReference>
<dbReference type="GenomeRNAi" id="38256"/>
<dbReference type="PRO" id="PR:Q9W062"/>
<dbReference type="Proteomes" id="UP000000803">
    <property type="component" value="Chromosome 3L"/>
</dbReference>
<dbReference type="Bgee" id="FBgn0035294">
    <property type="expression patterns" value="Expressed in adult middle midgut class I enteroendocrine cell in adult midgut (Drosophila) and 73 other cell types or tissues"/>
</dbReference>
<dbReference type="GO" id="GO:0071013">
    <property type="term" value="C:catalytic step 2 spliceosome"/>
    <property type="evidence" value="ECO:0007005"/>
    <property type="project" value="FlyBase"/>
</dbReference>
<dbReference type="GO" id="GO:0071011">
    <property type="term" value="C:precatalytic spliceosome"/>
    <property type="evidence" value="ECO:0007005"/>
    <property type="project" value="FlyBase"/>
</dbReference>
<dbReference type="GO" id="GO:0032991">
    <property type="term" value="C:protein-containing complex"/>
    <property type="evidence" value="ECO:0000353"/>
    <property type="project" value="FlyBase"/>
</dbReference>
<dbReference type="GO" id="GO:0005684">
    <property type="term" value="C:U2-type spliceosomal complex"/>
    <property type="evidence" value="ECO:0000318"/>
    <property type="project" value="GO_Central"/>
</dbReference>
<dbReference type="GO" id="GO:0000398">
    <property type="term" value="P:mRNA splicing, via spliceosome"/>
    <property type="evidence" value="ECO:0000315"/>
    <property type="project" value="FlyBase"/>
</dbReference>
<dbReference type="GO" id="GO:0010389">
    <property type="term" value="P:regulation of G2/M transition of mitotic cell cycle"/>
    <property type="evidence" value="ECO:0000315"/>
    <property type="project" value="FlyBase"/>
</dbReference>
<dbReference type="InterPro" id="IPR033194">
    <property type="entry name" value="MFAP1"/>
</dbReference>
<dbReference type="InterPro" id="IPR009730">
    <property type="entry name" value="MFAP1_C"/>
</dbReference>
<dbReference type="PANTHER" id="PTHR15327">
    <property type="entry name" value="MICROFIBRIL-ASSOCIATED PROTEIN"/>
    <property type="match status" value="1"/>
</dbReference>
<dbReference type="Pfam" id="PF06991">
    <property type="entry name" value="MFAP1"/>
    <property type="match status" value="1"/>
</dbReference>
<protein>
    <recommendedName>
        <fullName evidence="1">Microfibrillar-associated protein 1</fullName>
    </recommendedName>
    <alternativeName>
        <fullName evidence="1">Spliceosome B complex protein MFAP1</fullName>
    </alternativeName>
</protein>
<name>MFAP1_DROME</name>
<comment type="function">
    <text evidence="3">Required for pre-mRNA splicing.</text>
</comment>
<comment type="subunit">
    <text evidence="1 3">Component of the spliceosome B complex (By similarity). Interacts (via C-terminus) with Prp38.</text>
</comment>
<comment type="interaction">
    <interactant intactId="EBI-193121">
        <id>Q9W062</id>
    </interactant>
    <interactant intactId="EBI-118629">
        <id>Q7JVL3</id>
        <label>Prp38</label>
    </interactant>
    <organismsDiffer>false</organismsDiffer>
    <experiments>2</experiments>
</comment>
<comment type="subcellular location">
    <subcellularLocation>
        <location evidence="5">Nucleus</location>
    </subcellularLocation>
</comment>
<comment type="similarity">
    <text evidence="4">Belongs to the MFAP1 family.</text>
</comment>
<keyword id="KW-0507">mRNA processing</keyword>
<keyword id="KW-0508">mRNA splicing</keyword>
<keyword id="KW-0539">Nucleus</keyword>
<keyword id="KW-1185">Reference proteome</keyword>
<keyword id="KW-0747">Spliceosome</keyword>
<proteinExistence type="evidence at protein level"/>